<gene>
    <name evidence="1" type="primary">tilS</name>
    <name type="ordered locus">CJE1626</name>
</gene>
<keyword id="KW-0067">ATP-binding</keyword>
<keyword id="KW-0963">Cytoplasm</keyword>
<keyword id="KW-0436">Ligase</keyword>
<keyword id="KW-0547">Nucleotide-binding</keyword>
<keyword id="KW-0819">tRNA processing</keyword>
<accession>Q5HSX8</accession>
<comment type="function">
    <text evidence="1">Ligates lysine onto the cytidine present at position 34 of the AUA codon-specific tRNA(Ile) that contains the anticodon CAU, in an ATP-dependent manner. Cytidine is converted to lysidine, thus changing the amino acid specificity of the tRNA from methionine to isoleucine.</text>
</comment>
<comment type="catalytic activity">
    <reaction evidence="1">
        <text>cytidine(34) in tRNA(Ile2) + L-lysine + ATP = lysidine(34) in tRNA(Ile2) + AMP + diphosphate + H(+)</text>
        <dbReference type="Rhea" id="RHEA:43744"/>
        <dbReference type="Rhea" id="RHEA-COMP:10625"/>
        <dbReference type="Rhea" id="RHEA-COMP:10670"/>
        <dbReference type="ChEBI" id="CHEBI:15378"/>
        <dbReference type="ChEBI" id="CHEBI:30616"/>
        <dbReference type="ChEBI" id="CHEBI:32551"/>
        <dbReference type="ChEBI" id="CHEBI:33019"/>
        <dbReference type="ChEBI" id="CHEBI:82748"/>
        <dbReference type="ChEBI" id="CHEBI:83665"/>
        <dbReference type="ChEBI" id="CHEBI:456215"/>
        <dbReference type="EC" id="6.3.4.19"/>
    </reaction>
</comment>
<comment type="subcellular location">
    <subcellularLocation>
        <location evidence="1">Cytoplasm</location>
    </subcellularLocation>
</comment>
<comment type="domain">
    <text>The N-terminal region contains the highly conserved SGGXDS motif, predicted to be a P-loop motif involved in ATP binding.</text>
</comment>
<comment type="similarity">
    <text evidence="1">Belongs to the tRNA(Ile)-lysidine synthase family.</text>
</comment>
<reference key="1">
    <citation type="journal article" date="2005" name="PLoS Biol.">
        <title>Major structural differences and novel potential virulence mechanisms from the genomes of multiple Campylobacter species.</title>
        <authorList>
            <person name="Fouts D.E."/>
            <person name="Mongodin E.F."/>
            <person name="Mandrell R.E."/>
            <person name="Miller W.G."/>
            <person name="Rasko D.A."/>
            <person name="Ravel J."/>
            <person name="Brinkac L.M."/>
            <person name="DeBoy R.T."/>
            <person name="Parker C.T."/>
            <person name="Daugherty S.C."/>
            <person name="Dodson R.J."/>
            <person name="Durkin A.S."/>
            <person name="Madupu R."/>
            <person name="Sullivan S.A."/>
            <person name="Shetty J.U."/>
            <person name="Ayodeji M.A."/>
            <person name="Shvartsbeyn A."/>
            <person name="Schatz M.C."/>
            <person name="Badger J.H."/>
            <person name="Fraser C.M."/>
            <person name="Nelson K.E."/>
        </authorList>
    </citation>
    <scope>NUCLEOTIDE SEQUENCE [LARGE SCALE GENOMIC DNA]</scope>
    <source>
        <strain>RM1221</strain>
    </source>
</reference>
<evidence type="ECO:0000255" key="1">
    <source>
        <dbReference type="HAMAP-Rule" id="MF_01161"/>
    </source>
</evidence>
<protein>
    <recommendedName>
        <fullName evidence="1">tRNA(Ile)-lysidine synthase</fullName>
        <ecNumber evidence="1">6.3.4.19</ecNumber>
    </recommendedName>
    <alternativeName>
        <fullName evidence="1">tRNA(Ile)-2-lysyl-cytidine synthase</fullName>
    </alternativeName>
    <alternativeName>
        <fullName evidence="1">tRNA(Ile)-lysidine synthetase</fullName>
    </alternativeName>
</protein>
<sequence>MQIKDEILALLKKGKNLLAFSYGSDSSALFYLLMQEKIDFDLVMINYKTRKNSDLEELKAKELALKFHKKIFIKHAPKFQSNFEKKARDFRYDFFEKICLEQDYDHLILAHHLNDQFEWFLMQLSRGAGLAEILGMQECEKRQNYTLLRPLLFISKDEISSFLKEKDIFYFHDESNENEKYFRNYIRKNFSNAFVSEFHQGLKRSFSYLDEDRKKLYDFENIKEIQGLLICPKNESLIARAVKMKGLLLSTAQRKELLKGDCVLGGKIALAYKNEQAIVFEYETCQKLPKNFKEECRIAKIPRLLRAYLYNHKIDISSLSF</sequence>
<name>TILS_CAMJR</name>
<dbReference type="EC" id="6.3.4.19" evidence="1"/>
<dbReference type="EMBL" id="CP000025">
    <property type="protein sequence ID" value="AAW36059.1"/>
    <property type="molecule type" value="Genomic_DNA"/>
</dbReference>
<dbReference type="RefSeq" id="WP_002867260.1">
    <property type="nucleotide sequence ID" value="NC_003912.7"/>
</dbReference>
<dbReference type="SMR" id="Q5HSX8"/>
<dbReference type="KEGG" id="cjr:CJE1626"/>
<dbReference type="HOGENOM" id="CLU_053500_0_0_7"/>
<dbReference type="GO" id="GO:0005737">
    <property type="term" value="C:cytoplasm"/>
    <property type="evidence" value="ECO:0007669"/>
    <property type="project" value="UniProtKB-SubCell"/>
</dbReference>
<dbReference type="GO" id="GO:0005524">
    <property type="term" value="F:ATP binding"/>
    <property type="evidence" value="ECO:0007669"/>
    <property type="project" value="UniProtKB-KW"/>
</dbReference>
<dbReference type="GO" id="GO:0032267">
    <property type="term" value="F:tRNA(Ile)-lysidine synthase activity"/>
    <property type="evidence" value="ECO:0007669"/>
    <property type="project" value="UniProtKB-EC"/>
</dbReference>
<dbReference type="GO" id="GO:0006400">
    <property type="term" value="P:tRNA modification"/>
    <property type="evidence" value="ECO:0007669"/>
    <property type="project" value="UniProtKB-UniRule"/>
</dbReference>
<dbReference type="CDD" id="cd01992">
    <property type="entry name" value="TilS_N"/>
    <property type="match status" value="1"/>
</dbReference>
<dbReference type="Gene3D" id="3.40.50.620">
    <property type="entry name" value="HUPs"/>
    <property type="match status" value="1"/>
</dbReference>
<dbReference type="HAMAP" id="MF_01161">
    <property type="entry name" value="tRNA_Ile_lys_synt"/>
    <property type="match status" value="1"/>
</dbReference>
<dbReference type="InterPro" id="IPR014729">
    <property type="entry name" value="Rossmann-like_a/b/a_fold"/>
</dbReference>
<dbReference type="InterPro" id="IPR011063">
    <property type="entry name" value="TilS/TtcA_N"/>
</dbReference>
<dbReference type="InterPro" id="IPR012094">
    <property type="entry name" value="tRNA_Ile_lys_synt"/>
</dbReference>
<dbReference type="InterPro" id="IPR012795">
    <property type="entry name" value="tRNA_Ile_lys_synt_N"/>
</dbReference>
<dbReference type="NCBIfam" id="TIGR02432">
    <property type="entry name" value="lysidine_TilS_N"/>
    <property type="match status" value="1"/>
</dbReference>
<dbReference type="PANTHER" id="PTHR43033">
    <property type="entry name" value="TRNA(ILE)-LYSIDINE SYNTHASE-RELATED"/>
    <property type="match status" value="1"/>
</dbReference>
<dbReference type="PANTHER" id="PTHR43033:SF1">
    <property type="entry name" value="TRNA(ILE)-LYSIDINE SYNTHASE-RELATED"/>
    <property type="match status" value="1"/>
</dbReference>
<dbReference type="Pfam" id="PF01171">
    <property type="entry name" value="ATP_bind_3"/>
    <property type="match status" value="1"/>
</dbReference>
<dbReference type="SUPFAM" id="SSF52402">
    <property type="entry name" value="Adenine nucleotide alpha hydrolases-like"/>
    <property type="match status" value="1"/>
</dbReference>
<proteinExistence type="inferred from homology"/>
<organism>
    <name type="scientific">Campylobacter jejuni (strain RM1221)</name>
    <dbReference type="NCBI Taxonomy" id="195099"/>
    <lineage>
        <taxon>Bacteria</taxon>
        <taxon>Pseudomonadati</taxon>
        <taxon>Campylobacterota</taxon>
        <taxon>Epsilonproteobacteria</taxon>
        <taxon>Campylobacterales</taxon>
        <taxon>Campylobacteraceae</taxon>
        <taxon>Campylobacter</taxon>
    </lineage>
</organism>
<feature type="chain" id="PRO_0000181670" description="tRNA(Ile)-lysidine synthase">
    <location>
        <begin position="1"/>
        <end position="321"/>
    </location>
</feature>
<feature type="binding site" evidence="1">
    <location>
        <begin position="21"/>
        <end position="26"/>
    </location>
    <ligand>
        <name>ATP</name>
        <dbReference type="ChEBI" id="CHEBI:30616"/>
    </ligand>
</feature>